<accession>Q8CFV2</accession>
<protein>
    <recommendedName>
        <fullName>Protein FAM149A</fullName>
    </recommendedName>
</protein>
<sequence length="787" mass="85100">MKVAVLDLGSLFAKIFKLSTASPAVSSHPGGAAATGSVDSGASTSLREAETLTLLPSLPPDTAASREPFTPVHTPLPASHPRSSAAAQRVEATGCSGSLPSSSGASIAPPLTPYSGSAGSVASVTLPSPGVDWATLPSVTIPLGSNSVTASSPRNPRQLRAPGEREPSVWMAPGPVPKTLFFTLPDIGEEWTSDSDSQDDPEGRGLSEGLRKQSSEKSKDPLPTNFTRNVQKAIDKFASESPSSFSSSGSRTPTEAHNSWPGSSTQSSTTGLSTERSSVSSWRDDEFDKVSAQKVHQLFWEVEELLFEGKVSPQTQNLLAECSEWARRSLHLRVVGRQLVPPTDEGFQHFQGSLPSSATHEALPHVPDHTSSSRELCISGSQIVPEVHSASALTDPDGTESADLTSCSSLKEEVYHVDGNIEEYFAFDRKQDGDEHLGQSPALRGRKRHRHGLPPISPDDCIRDAVAAEVFDHVWTNVVEILEDLIRKTWESALTGGKKHKEKLKVAENRSPHVLMSRLSTDVCSVPPSRSSDTLQPSLAPHFNPPQFPQLHRFSSNFYSDLSGVMTIQAKPLQQRPTYSADRTQNDQDDKLPGGGVGASSRHRLGRILDARGPQTSVKKTPVHRRLPSIASDPQRLKTPTVYSDEILRGTKLQTGIDYLPSPAAVQTSRSRLPPIGSETGEPNTAASGSRPVSYRGRHPQSRVFSAMPDSIERSPLRERTIVLEQLSRPSTTHTFRSDTPRKGSLTPVEFVAHTWTGQSILTGSQYLPKSYQRATLTARKRFQVAS</sequence>
<organism>
    <name type="scientific">Mus musculus</name>
    <name type="common">Mouse</name>
    <dbReference type="NCBI Taxonomy" id="10090"/>
    <lineage>
        <taxon>Eukaryota</taxon>
        <taxon>Metazoa</taxon>
        <taxon>Chordata</taxon>
        <taxon>Craniata</taxon>
        <taxon>Vertebrata</taxon>
        <taxon>Euteleostomi</taxon>
        <taxon>Mammalia</taxon>
        <taxon>Eutheria</taxon>
        <taxon>Euarchontoglires</taxon>
        <taxon>Glires</taxon>
        <taxon>Rodentia</taxon>
        <taxon>Myomorpha</taxon>
        <taxon>Muroidea</taxon>
        <taxon>Muridae</taxon>
        <taxon>Murinae</taxon>
        <taxon>Mus</taxon>
        <taxon>Mus</taxon>
    </lineage>
</organism>
<name>F149A_MOUSE</name>
<comment type="similarity">
    <text evidence="2">Belongs to the FAM149 family.</text>
</comment>
<keyword id="KW-1185">Reference proteome</keyword>
<reference key="1">
    <citation type="journal article" date="2005" name="Science">
        <title>The transcriptional landscape of the mammalian genome.</title>
        <authorList>
            <person name="Carninci P."/>
            <person name="Kasukawa T."/>
            <person name="Katayama S."/>
            <person name="Gough J."/>
            <person name="Frith M.C."/>
            <person name="Maeda N."/>
            <person name="Oyama R."/>
            <person name="Ravasi T."/>
            <person name="Lenhard B."/>
            <person name="Wells C."/>
            <person name="Kodzius R."/>
            <person name="Shimokawa K."/>
            <person name="Bajic V.B."/>
            <person name="Brenner S.E."/>
            <person name="Batalov S."/>
            <person name="Forrest A.R."/>
            <person name="Zavolan M."/>
            <person name="Davis M.J."/>
            <person name="Wilming L.G."/>
            <person name="Aidinis V."/>
            <person name="Allen J.E."/>
            <person name="Ambesi-Impiombato A."/>
            <person name="Apweiler R."/>
            <person name="Aturaliya R.N."/>
            <person name="Bailey T.L."/>
            <person name="Bansal M."/>
            <person name="Baxter L."/>
            <person name="Beisel K.W."/>
            <person name="Bersano T."/>
            <person name="Bono H."/>
            <person name="Chalk A.M."/>
            <person name="Chiu K.P."/>
            <person name="Choudhary V."/>
            <person name="Christoffels A."/>
            <person name="Clutterbuck D.R."/>
            <person name="Crowe M.L."/>
            <person name="Dalla E."/>
            <person name="Dalrymple B.P."/>
            <person name="de Bono B."/>
            <person name="Della Gatta G."/>
            <person name="di Bernardo D."/>
            <person name="Down T."/>
            <person name="Engstrom P."/>
            <person name="Fagiolini M."/>
            <person name="Faulkner G."/>
            <person name="Fletcher C.F."/>
            <person name="Fukushima T."/>
            <person name="Furuno M."/>
            <person name="Futaki S."/>
            <person name="Gariboldi M."/>
            <person name="Georgii-Hemming P."/>
            <person name="Gingeras T.R."/>
            <person name="Gojobori T."/>
            <person name="Green R.E."/>
            <person name="Gustincich S."/>
            <person name="Harbers M."/>
            <person name="Hayashi Y."/>
            <person name="Hensch T.K."/>
            <person name="Hirokawa N."/>
            <person name="Hill D."/>
            <person name="Huminiecki L."/>
            <person name="Iacono M."/>
            <person name="Ikeo K."/>
            <person name="Iwama A."/>
            <person name="Ishikawa T."/>
            <person name="Jakt M."/>
            <person name="Kanapin A."/>
            <person name="Katoh M."/>
            <person name="Kawasawa Y."/>
            <person name="Kelso J."/>
            <person name="Kitamura H."/>
            <person name="Kitano H."/>
            <person name="Kollias G."/>
            <person name="Krishnan S.P."/>
            <person name="Kruger A."/>
            <person name="Kummerfeld S.K."/>
            <person name="Kurochkin I.V."/>
            <person name="Lareau L.F."/>
            <person name="Lazarevic D."/>
            <person name="Lipovich L."/>
            <person name="Liu J."/>
            <person name="Liuni S."/>
            <person name="McWilliam S."/>
            <person name="Madan Babu M."/>
            <person name="Madera M."/>
            <person name="Marchionni L."/>
            <person name="Matsuda H."/>
            <person name="Matsuzawa S."/>
            <person name="Miki H."/>
            <person name="Mignone F."/>
            <person name="Miyake S."/>
            <person name="Morris K."/>
            <person name="Mottagui-Tabar S."/>
            <person name="Mulder N."/>
            <person name="Nakano N."/>
            <person name="Nakauchi H."/>
            <person name="Ng P."/>
            <person name="Nilsson R."/>
            <person name="Nishiguchi S."/>
            <person name="Nishikawa S."/>
            <person name="Nori F."/>
            <person name="Ohara O."/>
            <person name="Okazaki Y."/>
            <person name="Orlando V."/>
            <person name="Pang K.C."/>
            <person name="Pavan W.J."/>
            <person name="Pavesi G."/>
            <person name="Pesole G."/>
            <person name="Petrovsky N."/>
            <person name="Piazza S."/>
            <person name="Reed J."/>
            <person name="Reid J.F."/>
            <person name="Ring B.Z."/>
            <person name="Ringwald M."/>
            <person name="Rost B."/>
            <person name="Ruan Y."/>
            <person name="Salzberg S.L."/>
            <person name="Sandelin A."/>
            <person name="Schneider C."/>
            <person name="Schoenbach C."/>
            <person name="Sekiguchi K."/>
            <person name="Semple C.A."/>
            <person name="Seno S."/>
            <person name="Sessa L."/>
            <person name="Sheng Y."/>
            <person name="Shibata Y."/>
            <person name="Shimada H."/>
            <person name="Shimada K."/>
            <person name="Silva D."/>
            <person name="Sinclair B."/>
            <person name="Sperling S."/>
            <person name="Stupka E."/>
            <person name="Sugiura K."/>
            <person name="Sultana R."/>
            <person name="Takenaka Y."/>
            <person name="Taki K."/>
            <person name="Tammoja K."/>
            <person name="Tan S.L."/>
            <person name="Tang S."/>
            <person name="Taylor M.S."/>
            <person name="Tegner J."/>
            <person name="Teichmann S.A."/>
            <person name="Ueda H.R."/>
            <person name="van Nimwegen E."/>
            <person name="Verardo R."/>
            <person name="Wei C.L."/>
            <person name="Yagi K."/>
            <person name="Yamanishi H."/>
            <person name="Zabarovsky E."/>
            <person name="Zhu S."/>
            <person name="Zimmer A."/>
            <person name="Hide W."/>
            <person name="Bult C."/>
            <person name="Grimmond S.M."/>
            <person name="Teasdale R.D."/>
            <person name="Liu E.T."/>
            <person name="Brusic V."/>
            <person name="Quackenbush J."/>
            <person name="Wahlestedt C."/>
            <person name="Mattick J.S."/>
            <person name="Hume D.A."/>
            <person name="Kai C."/>
            <person name="Sasaki D."/>
            <person name="Tomaru Y."/>
            <person name="Fukuda S."/>
            <person name="Kanamori-Katayama M."/>
            <person name="Suzuki M."/>
            <person name="Aoki J."/>
            <person name="Arakawa T."/>
            <person name="Iida J."/>
            <person name="Imamura K."/>
            <person name="Itoh M."/>
            <person name="Kato T."/>
            <person name="Kawaji H."/>
            <person name="Kawagashira N."/>
            <person name="Kawashima T."/>
            <person name="Kojima M."/>
            <person name="Kondo S."/>
            <person name="Konno H."/>
            <person name="Nakano K."/>
            <person name="Ninomiya N."/>
            <person name="Nishio T."/>
            <person name="Okada M."/>
            <person name="Plessy C."/>
            <person name="Shibata K."/>
            <person name="Shiraki T."/>
            <person name="Suzuki S."/>
            <person name="Tagami M."/>
            <person name="Waki K."/>
            <person name="Watahiki A."/>
            <person name="Okamura-Oho Y."/>
            <person name="Suzuki H."/>
            <person name="Kawai J."/>
            <person name="Hayashizaki Y."/>
        </authorList>
    </citation>
    <scope>NUCLEOTIDE SEQUENCE [LARGE SCALE MRNA]</scope>
    <source>
        <strain>C57BL/6J</strain>
        <tissue>Hippocampus</tissue>
        <tissue>Medulla oblongata</tissue>
    </source>
</reference>
<reference key="2">
    <citation type="journal article" date="2004" name="Genome Res.">
        <title>The status, quality, and expansion of the NIH full-length cDNA project: the Mammalian Gene Collection (MGC).</title>
        <authorList>
            <consortium name="The MGC Project Team"/>
        </authorList>
    </citation>
    <scope>NUCLEOTIDE SEQUENCE [LARGE SCALE MRNA]</scope>
    <source>
        <tissue>Eye</tissue>
    </source>
</reference>
<dbReference type="EMBL" id="AK140440">
    <property type="protein sequence ID" value="BAE24387.1"/>
    <property type="molecule type" value="mRNA"/>
</dbReference>
<dbReference type="EMBL" id="AK141607">
    <property type="protein sequence ID" value="BAE24761.1"/>
    <property type="molecule type" value="mRNA"/>
</dbReference>
<dbReference type="EMBL" id="BC035537">
    <property type="protein sequence ID" value="AAH35537.1"/>
    <property type="molecule type" value="mRNA"/>
</dbReference>
<dbReference type="CCDS" id="CCDS22277.1"/>
<dbReference type="RefSeq" id="NP_705763.1">
    <property type="nucleotide sequence ID" value="NM_153535.2"/>
</dbReference>
<dbReference type="FunCoup" id="Q8CFV2">
    <property type="interactions" value="1"/>
</dbReference>
<dbReference type="STRING" id="10090.ENSMUSP00000091245"/>
<dbReference type="iPTMnet" id="Q8CFV2"/>
<dbReference type="PhosphoSitePlus" id="Q8CFV2"/>
<dbReference type="PaxDb" id="10090-ENSMUSP00000091245"/>
<dbReference type="ProteomicsDB" id="275963"/>
<dbReference type="Antibodypedia" id="64772">
    <property type="antibodies" value="11 antibodies from 6 providers"/>
</dbReference>
<dbReference type="DNASU" id="212326"/>
<dbReference type="Ensembl" id="ENSMUST00000093526.13">
    <property type="protein sequence ID" value="ENSMUSP00000091245.7"/>
    <property type="gene ID" value="ENSMUSG00000070044.16"/>
</dbReference>
<dbReference type="GeneID" id="212326"/>
<dbReference type="KEGG" id="mmu:212326"/>
<dbReference type="UCSC" id="uc009lox.1">
    <property type="organism name" value="mouse"/>
</dbReference>
<dbReference type="AGR" id="MGI:2387177"/>
<dbReference type="CTD" id="25854"/>
<dbReference type="MGI" id="MGI:2387177">
    <property type="gene designation" value="Fam149a"/>
</dbReference>
<dbReference type="VEuPathDB" id="HostDB:ENSMUSG00000070044"/>
<dbReference type="eggNOG" id="ENOG502QQUG">
    <property type="taxonomic scope" value="Eukaryota"/>
</dbReference>
<dbReference type="GeneTree" id="ENSGT00530000063727"/>
<dbReference type="HOGENOM" id="CLU_018180_0_0_1"/>
<dbReference type="InParanoid" id="Q8CFV2"/>
<dbReference type="OMA" id="VPATRNK"/>
<dbReference type="OrthoDB" id="2134133at2759"/>
<dbReference type="PhylomeDB" id="Q8CFV2"/>
<dbReference type="TreeFam" id="TF330725"/>
<dbReference type="BioGRID-ORCS" id="212326">
    <property type="hits" value="3 hits in 77 CRISPR screens"/>
</dbReference>
<dbReference type="ChiTaRS" id="Fam149a">
    <property type="organism name" value="mouse"/>
</dbReference>
<dbReference type="PRO" id="PR:Q8CFV2"/>
<dbReference type="Proteomes" id="UP000000589">
    <property type="component" value="Chromosome 8"/>
</dbReference>
<dbReference type="RNAct" id="Q8CFV2">
    <property type="molecule type" value="protein"/>
</dbReference>
<dbReference type="Bgee" id="ENSMUSG00000070044">
    <property type="expression patterns" value="Expressed in dorsal pancreas and 195 other cell types or tissues"/>
</dbReference>
<dbReference type="ExpressionAtlas" id="Q8CFV2">
    <property type="expression patterns" value="baseline and differential"/>
</dbReference>
<dbReference type="InterPro" id="IPR022194">
    <property type="entry name" value="DUF3719"/>
</dbReference>
<dbReference type="InterPro" id="IPR039630">
    <property type="entry name" value="FAM149"/>
</dbReference>
<dbReference type="PANTHER" id="PTHR31997">
    <property type="entry name" value="AGAP003710-PA"/>
    <property type="match status" value="1"/>
</dbReference>
<dbReference type="PANTHER" id="PTHR31997:SF2">
    <property type="entry name" value="PROTEIN FAM149A"/>
    <property type="match status" value="1"/>
</dbReference>
<dbReference type="Pfam" id="PF12516">
    <property type="entry name" value="DUF3719"/>
    <property type="match status" value="1"/>
</dbReference>
<evidence type="ECO:0000256" key="1">
    <source>
        <dbReference type="SAM" id="MobiDB-lite"/>
    </source>
</evidence>
<evidence type="ECO:0000305" key="2"/>
<feature type="chain" id="PRO_0000319931" description="Protein FAM149A">
    <location>
        <begin position="1"/>
        <end position="787"/>
    </location>
</feature>
<feature type="region of interest" description="Disordered" evidence="1">
    <location>
        <begin position="22"/>
        <end position="105"/>
    </location>
</feature>
<feature type="region of interest" description="Disordered" evidence="1">
    <location>
        <begin position="144"/>
        <end position="175"/>
    </location>
</feature>
<feature type="region of interest" description="Disordered" evidence="1">
    <location>
        <begin position="189"/>
        <end position="226"/>
    </location>
</feature>
<feature type="region of interest" description="Disordered" evidence="1">
    <location>
        <begin position="238"/>
        <end position="284"/>
    </location>
</feature>
<feature type="region of interest" description="Disordered" evidence="1">
    <location>
        <begin position="432"/>
        <end position="455"/>
    </location>
</feature>
<feature type="region of interest" description="Disordered" evidence="1">
    <location>
        <begin position="573"/>
        <end position="602"/>
    </location>
</feature>
<feature type="region of interest" description="Disordered" evidence="1">
    <location>
        <begin position="665"/>
        <end position="697"/>
    </location>
</feature>
<feature type="compositionally biased region" description="Polar residues" evidence="1">
    <location>
        <begin position="37"/>
        <end position="46"/>
    </location>
</feature>
<feature type="compositionally biased region" description="Low complexity" evidence="1">
    <location>
        <begin position="51"/>
        <end position="65"/>
    </location>
</feature>
<feature type="compositionally biased region" description="Low complexity" evidence="1">
    <location>
        <begin position="96"/>
        <end position="105"/>
    </location>
</feature>
<feature type="compositionally biased region" description="Polar residues" evidence="1">
    <location>
        <begin position="144"/>
        <end position="155"/>
    </location>
</feature>
<feature type="compositionally biased region" description="Acidic residues" evidence="1">
    <location>
        <begin position="189"/>
        <end position="200"/>
    </location>
</feature>
<feature type="compositionally biased region" description="Basic and acidic residues" evidence="1">
    <location>
        <begin position="201"/>
        <end position="220"/>
    </location>
</feature>
<feature type="compositionally biased region" description="Low complexity" evidence="1">
    <location>
        <begin position="239"/>
        <end position="250"/>
    </location>
</feature>
<feature type="compositionally biased region" description="Polar residues" evidence="1">
    <location>
        <begin position="251"/>
        <end position="261"/>
    </location>
</feature>
<feature type="compositionally biased region" description="Low complexity" evidence="1">
    <location>
        <begin position="262"/>
        <end position="274"/>
    </location>
</feature>
<gene>
    <name type="primary">Fam149a</name>
</gene>
<proteinExistence type="evidence at transcript level"/>